<keyword id="KW-0369">Histidine metabolism</keyword>
<keyword id="KW-0378">Hydrolase</keyword>
<keyword id="KW-0464">Manganese</keyword>
<keyword id="KW-0479">Metal-binding</keyword>
<name>HUTG_STAAT</name>
<proteinExistence type="inferred from homology"/>
<gene>
    <name evidence="1" type="primary">hutG</name>
    <name type="ordered locus">USA300HOU_2314</name>
</gene>
<reference key="1">
    <citation type="journal article" date="2007" name="BMC Microbiol.">
        <title>Subtle genetic changes enhance virulence of methicillin resistant and sensitive Staphylococcus aureus.</title>
        <authorList>
            <person name="Highlander S.K."/>
            <person name="Hulten K.G."/>
            <person name="Qin X."/>
            <person name="Jiang H."/>
            <person name="Yerrapragada S."/>
            <person name="Mason E.O. Jr."/>
            <person name="Shang Y."/>
            <person name="Williams T.M."/>
            <person name="Fortunov R.M."/>
            <person name="Liu Y."/>
            <person name="Igboeli O."/>
            <person name="Petrosino J."/>
            <person name="Tirumalai M."/>
            <person name="Uzman A."/>
            <person name="Fox G.E."/>
            <person name="Cardenas A.M."/>
            <person name="Muzny D.M."/>
            <person name="Hemphill L."/>
            <person name="Ding Y."/>
            <person name="Dugan S."/>
            <person name="Blyth P.R."/>
            <person name="Buhay C.J."/>
            <person name="Dinh H.H."/>
            <person name="Hawes A.C."/>
            <person name="Holder M."/>
            <person name="Kovar C.L."/>
            <person name="Lee S.L."/>
            <person name="Liu W."/>
            <person name="Nazareth L.V."/>
            <person name="Wang Q."/>
            <person name="Zhou J."/>
            <person name="Kaplan S.L."/>
            <person name="Weinstock G.M."/>
        </authorList>
    </citation>
    <scope>NUCLEOTIDE SEQUENCE [LARGE SCALE GENOMIC DNA]</scope>
    <source>
        <strain>USA300 / TCH1516</strain>
    </source>
</reference>
<evidence type="ECO:0000255" key="1">
    <source>
        <dbReference type="HAMAP-Rule" id="MF_00737"/>
    </source>
</evidence>
<comment type="function">
    <text evidence="1">Catalyzes the conversion of N-formimidoyl-L-glutamate to L-glutamate and formamide.</text>
</comment>
<comment type="catalytic activity">
    <reaction evidence="1">
        <text>N-formimidoyl-L-glutamate + H2O = formamide + L-glutamate</text>
        <dbReference type="Rhea" id="RHEA:22492"/>
        <dbReference type="ChEBI" id="CHEBI:15377"/>
        <dbReference type="ChEBI" id="CHEBI:16397"/>
        <dbReference type="ChEBI" id="CHEBI:29985"/>
        <dbReference type="ChEBI" id="CHEBI:58928"/>
        <dbReference type="EC" id="3.5.3.8"/>
    </reaction>
</comment>
<comment type="cofactor">
    <cofactor evidence="1">
        <name>Mn(2+)</name>
        <dbReference type="ChEBI" id="CHEBI:29035"/>
    </cofactor>
    <text evidence="1">Binds 2 manganese ions per subunit.</text>
</comment>
<comment type="pathway">
    <text evidence="1">Amino-acid degradation; L-histidine degradation into L-glutamate; L-glutamate from N-formimidoyl-L-glutamate (hydrolase route): step 1/1.</text>
</comment>
<comment type="similarity">
    <text evidence="1">Belongs to the arginase family.</text>
</comment>
<sequence>MYKQGEPNLWTGRLDSETDPKKFRHFQTVTFEDLSKLEKSSMPSGVGILGYAVDKGVALNKGRIGAKEGPDAIKQAFAGLPDLNQCETLVDYGNVYHDHEELIDTQKEFAMLAAKSIANHRQTFLLGGGHDIAYAQYLATRKVYPTQSIGVINIDAHFDTRAEQQSTSGTSFRQILEEDENTDYLVLGIAQGGNTQSLFDYAKEKKIDYVFADELLSHVSPTIKDMIERFVHEHDVIMFTICMDVIDSAFAPGVSAPAVLGLYPHTVLELAKRIIPSDKVSSVSIAEMNPTYDADNRTAKLVANLVHHFLK</sequence>
<feature type="chain" id="PRO_1000083417" description="Formimidoylglutamase">
    <location>
        <begin position="1"/>
        <end position="311"/>
    </location>
</feature>
<feature type="binding site" evidence="1">
    <location>
        <position position="130"/>
    </location>
    <ligand>
        <name>Mn(2+)</name>
        <dbReference type="ChEBI" id="CHEBI:29035"/>
        <label>1</label>
    </ligand>
</feature>
<feature type="binding site" evidence="1">
    <location>
        <position position="155"/>
    </location>
    <ligand>
        <name>Mn(2+)</name>
        <dbReference type="ChEBI" id="CHEBI:29035"/>
        <label>1</label>
    </ligand>
</feature>
<feature type="binding site" evidence="1">
    <location>
        <position position="155"/>
    </location>
    <ligand>
        <name>Mn(2+)</name>
        <dbReference type="ChEBI" id="CHEBI:29035"/>
        <label>2</label>
    </ligand>
</feature>
<feature type="binding site" evidence="1">
    <location>
        <position position="157"/>
    </location>
    <ligand>
        <name>Mn(2+)</name>
        <dbReference type="ChEBI" id="CHEBI:29035"/>
        <label>2</label>
    </ligand>
</feature>
<feature type="binding site" evidence="1">
    <location>
        <position position="159"/>
    </location>
    <ligand>
        <name>Mn(2+)</name>
        <dbReference type="ChEBI" id="CHEBI:29035"/>
        <label>1</label>
    </ligand>
</feature>
<feature type="binding site" evidence="1">
    <location>
        <position position="242"/>
    </location>
    <ligand>
        <name>Mn(2+)</name>
        <dbReference type="ChEBI" id="CHEBI:29035"/>
        <label>1</label>
    </ligand>
</feature>
<feature type="binding site" evidence="1">
    <location>
        <position position="242"/>
    </location>
    <ligand>
        <name>Mn(2+)</name>
        <dbReference type="ChEBI" id="CHEBI:29035"/>
        <label>2</label>
    </ligand>
</feature>
<feature type="binding site" evidence="1">
    <location>
        <position position="244"/>
    </location>
    <ligand>
        <name>Mn(2+)</name>
        <dbReference type="ChEBI" id="CHEBI:29035"/>
        <label>2</label>
    </ligand>
</feature>
<protein>
    <recommendedName>
        <fullName evidence="1">Formimidoylglutamase</fullName>
        <ecNumber evidence="1">3.5.3.8</ecNumber>
    </recommendedName>
    <alternativeName>
        <fullName evidence="1">Formiminoglutamase</fullName>
    </alternativeName>
    <alternativeName>
        <fullName evidence="1">Formiminoglutamate hydrolase</fullName>
    </alternativeName>
</protein>
<organism>
    <name type="scientific">Staphylococcus aureus (strain USA300 / TCH1516)</name>
    <dbReference type="NCBI Taxonomy" id="451516"/>
    <lineage>
        <taxon>Bacteria</taxon>
        <taxon>Bacillati</taxon>
        <taxon>Bacillota</taxon>
        <taxon>Bacilli</taxon>
        <taxon>Bacillales</taxon>
        <taxon>Staphylococcaceae</taxon>
        <taxon>Staphylococcus</taxon>
    </lineage>
</organism>
<dbReference type="EC" id="3.5.3.8" evidence="1"/>
<dbReference type="EMBL" id="CP000730">
    <property type="protein sequence ID" value="ABX30306.1"/>
    <property type="molecule type" value="Genomic_DNA"/>
</dbReference>
<dbReference type="RefSeq" id="WP_000277968.1">
    <property type="nucleotide sequence ID" value="NC_010079.1"/>
</dbReference>
<dbReference type="SMR" id="A8Z523"/>
<dbReference type="KEGG" id="sax:USA300HOU_2314"/>
<dbReference type="HOGENOM" id="CLU_039478_2_0_9"/>
<dbReference type="UniPathway" id="UPA00379">
    <property type="reaction ID" value="UER00552"/>
</dbReference>
<dbReference type="GO" id="GO:0008783">
    <property type="term" value="F:agmatinase activity"/>
    <property type="evidence" value="ECO:0007669"/>
    <property type="project" value="TreeGrafter"/>
</dbReference>
<dbReference type="GO" id="GO:0050415">
    <property type="term" value="F:formimidoylglutamase activity"/>
    <property type="evidence" value="ECO:0007669"/>
    <property type="project" value="UniProtKB-UniRule"/>
</dbReference>
<dbReference type="GO" id="GO:0030145">
    <property type="term" value="F:manganese ion binding"/>
    <property type="evidence" value="ECO:0007669"/>
    <property type="project" value="UniProtKB-UniRule"/>
</dbReference>
<dbReference type="GO" id="GO:0019556">
    <property type="term" value="P:L-histidine catabolic process to glutamate and formamide"/>
    <property type="evidence" value="ECO:0007669"/>
    <property type="project" value="UniProtKB-UniPathway"/>
</dbReference>
<dbReference type="GO" id="GO:0019557">
    <property type="term" value="P:L-histidine catabolic process to glutamate and formate"/>
    <property type="evidence" value="ECO:0007669"/>
    <property type="project" value="UniProtKB-UniPathway"/>
</dbReference>
<dbReference type="GO" id="GO:0033389">
    <property type="term" value="P:putrescine biosynthetic process from arginine, via agmatine"/>
    <property type="evidence" value="ECO:0007669"/>
    <property type="project" value="TreeGrafter"/>
</dbReference>
<dbReference type="CDD" id="cd09988">
    <property type="entry name" value="Formimidoylglutamase"/>
    <property type="match status" value="1"/>
</dbReference>
<dbReference type="FunFam" id="3.40.800.10:FF:000015">
    <property type="entry name" value="Formimidoylglutamase"/>
    <property type="match status" value="1"/>
</dbReference>
<dbReference type="Gene3D" id="3.40.800.10">
    <property type="entry name" value="Ureohydrolase domain"/>
    <property type="match status" value="1"/>
</dbReference>
<dbReference type="HAMAP" id="MF_00737">
    <property type="entry name" value="Formimidoylglutam"/>
    <property type="match status" value="1"/>
</dbReference>
<dbReference type="InterPro" id="IPR005923">
    <property type="entry name" value="HutG"/>
</dbReference>
<dbReference type="InterPro" id="IPR006035">
    <property type="entry name" value="Ureohydrolase"/>
</dbReference>
<dbReference type="InterPro" id="IPR023696">
    <property type="entry name" value="Ureohydrolase_dom_sf"/>
</dbReference>
<dbReference type="NCBIfam" id="TIGR01227">
    <property type="entry name" value="hutG"/>
    <property type="match status" value="1"/>
</dbReference>
<dbReference type="PANTHER" id="PTHR11358">
    <property type="entry name" value="ARGINASE/AGMATINASE"/>
    <property type="match status" value="1"/>
</dbReference>
<dbReference type="PANTHER" id="PTHR11358:SF35">
    <property type="entry name" value="FORMIMIDOYLGLUTAMASE"/>
    <property type="match status" value="1"/>
</dbReference>
<dbReference type="Pfam" id="PF00491">
    <property type="entry name" value="Arginase"/>
    <property type="match status" value="1"/>
</dbReference>
<dbReference type="PIRSF" id="PIRSF036979">
    <property type="entry name" value="Arginase"/>
    <property type="match status" value="1"/>
</dbReference>
<dbReference type="SUPFAM" id="SSF52768">
    <property type="entry name" value="Arginase/deacetylase"/>
    <property type="match status" value="1"/>
</dbReference>
<dbReference type="PROSITE" id="PS51409">
    <property type="entry name" value="ARGINASE_2"/>
    <property type="match status" value="1"/>
</dbReference>
<accession>A8Z523</accession>